<name>RAN1B_LOTJA</name>
<accession>P54766</accession>
<feature type="chain" id="PRO_0000208721" description="GTP-binding nuclear protein Ran1B">
    <location>
        <begin position="1" status="less than"/>
        <end position="209"/>
    </location>
</feature>
<feature type="domain" description="Small GTPase Ran-type" evidence="3">
    <location>
        <begin position="1"/>
        <end position="162"/>
    </location>
</feature>
<feature type="region of interest" description="Switch-I" evidence="3">
    <location>
        <begin position="28"/>
        <end position="36"/>
    </location>
</feature>
<feature type="region of interest" description="Switch-II" evidence="3">
    <location>
        <begin position="59"/>
        <end position="75"/>
    </location>
</feature>
<feature type="region of interest" description="Disordered" evidence="4">
    <location>
        <begin position="187"/>
        <end position="209"/>
    </location>
</feature>
<feature type="compositionally biased region" description="Low complexity" evidence="4">
    <location>
        <begin position="187"/>
        <end position="200"/>
    </location>
</feature>
<feature type="binding site" evidence="2">
    <location>
        <begin position="9"/>
        <end position="16"/>
    </location>
    <ligand>
        <name>GTP</name>
        <dbReference type="ChEBI" id="CHEBI:37565"/>
    </ligand>
</feature>
<feature type="binding site" evidence="2">
    <location>
        <position position="59"/>
    </location>
    <ligand>
        <name>GTP</name>
        <dbReference type="ChEBI" id="CHEBI:37565"/>
    </ligand>
</feature>
<feature type="binding site" evidence="2">
    <location>
        <begin position="113"/>
        <end position="116"/>
    </location>
    <ligand>
        <name>GTP</name>
        <dbReference type="ChEBI" id="CHEBI:37565"/>
    </ligand>
</feature>
<feature type="binding site" evidence="2">
    <location>
        <begin position="141"/>
        <end position="143"/>
    </location>
    <ligand>
        <name>GTP</name>
        <dbReference type="ChEBI" id="CHEBI:37565"/>
    </ligand>
</feature>
<feature type="non-terminal residue">
    <location>
        <position position="1"/>
    </location>
</feature>
<comment type="function">
    <text evidence="1">GTP-binding protein involved in nucleocytoplasmic transport. Required for the import of protein into the nucleus and also for RNA export. Involved in chromatin condensation and control of cell cycle (By similarity).</text>
</comment>
<comment type="subunit">
    <text evidence="2">Found in a nuclear export complex with RanGTP, exportin and pre-miRNA (By similarity).</text>
</comment>
<comment type="subcellular location">
    <subcellularLocation>
        <location evidence="1">Nucleus</location>
    </subcellularLocation>
</comment>
<comment type="similarity">
    <text evidence="3 5">Belongs to the small GTPase superfamily. Ran family.</text>
</comment>
<gene>
    <name type="primary">RAN1B</name>
</gene>
<keyword id="KW-0342">GTP-binding</keyword>
<keyword id="KW-0547">Nucleotide-binding</keyword>
<keyword id="KW-0539">Nucleus</keyword>
<keyword id="KW-0653">Protein transport</keyword>
<keyword id="KW-0813">Transport</keyword>
<organism>
    <name type="scientific">Lotus japonicus</name>
    <name type="common">Lotus corniculatus var. japonicus</name>
    <dbReference type="NCBI Taxonomy" id="34305"/>
    <lineage>
        <taxon>Eukaryota</taxon>
        <taxon>Viridiplantae</taxon>
        <taxon>Streptophyta</taxon>
        <taxon>Embryophyta</taxon>
        <taxon>Tracheophyta</taxon>
        <taxon>Spermatophyta</taxon>
        <taxon>Magnoliopsida</taxon>
        <taxon>eudicotyledons</taxon>
        <taxon>Gunneridae</taxon>
        <taxon>Pentapetalae</taxon>
        <taxon>rosids</taxon>
        <taxon>fabids</taxon>
        <taxon>Fabales</taxon>
        <taxon>Fabaceae</taxon>
        <taxon>Papilionoideae</taxon>
        <taxon>50 kb inversion clade</taxon>
        <taxon>NPAAA clade</taxon>
        <taxon>Hologalegina</taxon>
        <taxon>robinioid clade</taxon>
        <taxon>Loteae</taxon>
        <taxon>Lotus</taxon>
    </lineage>
</organism>
<dbReference type="EMBL" id="Z73960">
    <property type="protein sequence ID" value="CAA98188.1"/>
    <property type="molecule type" value="mRNA"/>
</dbReference>
<dbReference type="SMR" id="P54766"/>
<dbReference type="GO" id="GO:0005737">
    <property type="term" value="C:cytoplasm"/>
    <property type="evidence" value="ECO:0007669"/>
    <property type="project" value="TreeGrafter"/>
</dbReference>
<dbReference type="GO" id="GO:0005634">
    <property type="term" value="C:nucleus"/>
    <property type="evidence" value="ECO:0007669"/>
    <property type="project" value="UniProtKB-SubCell"/>
</dbReference>
<dbReference type="GO" id="GO:0005525">
    <property type="term" value="F:GTP binding"/>
    <property type="evidence" value="ECO:0007669"/>
    <property type="project" value="UniProtKB-KW"/>
</dbReference>
<dbReference type="GO" id="GO:0003924">
    <property type="term" value="F:GTPase activity"/>
    <property type="evidence" value="ECO:0007669"/>
    <property type="project" value="InterPro"/>
</dbReference>
<dbReference type="GO" id="GO:0006606">
    <property type="term" value="P:protein import into nucleus"/>
    <property type="evidence" value="ECO:0007669"/>
    <property type="project" value="TreeGrafter"/>
</dbReference>
<dbReference type="GO" id="GO:0000054">
    <property type="term" value="P:ribosomal subunit export from nucleus"/>
    <property type="evidence" value="ECO:0007669"/>
    <property type="project" value="TreeGrafter"/>
</dbReference>
<dbReference type="CDD" id="cd00877">
    <property type="entry name" value="Ran"/>
    <property type="match status" value="1"/>
</dbReference>
<dbReference type="FunFam" id="3.40.50.300:FF:000369">
    <property type="entry name" value="GTP-binding nuclear protein"/>
    <property type="match status" value="1"/>
</dbReference>
<dbReference type="Gene3D" id="3.40.50.300">
    <property type="entry name" value="P-loop containing nucleotide triphosphate hydrolases"/>
    <property type="match status" value="1"/>
</dbReference>
<dbReference type="InterPro" id="IPR027417">
    <property type="entry name" value="P-loop_NTPase"/>
</dbReference>
<dbReference type="InterPro" id="IPR002041">
    <property type="entry name" value="Ran_GTPase"/>
</dbReference>
<dbReference type="InterPro" id="IPR005225">
    <property type="entry name" value="Small_GTP-bd"/>
</dbReference>
<dbReference type="InterPro" id="IPR001806">
    <property type="entry name" value="Small_GTPase"/>
</dbReference>
<dbReference type="NCBIfam" id="TIGR00231">
    <property type="entry name" value="small_GTP"/>
    <property type="match status" value="1"/>
</dbReference>
<dbReference type="PANTHER" id="PTHR24071:SF33">
    <property type="entry name" value="GTP-BINDING NUCLEAR PROTEIN RAN-1"/>
    <property type="match status" value="1"/>
</dbReference>
<dbReference type="PANTHER" id="PTHR24071">
    <property type="entry name" value="RAN GTPASE"/>
    <property type="match status" value="1"/>
</dbReference>
<dbReference type="Pfam" id="PF00071">
    <property type="entry name" value="Ras"/>
    <property type="match status" value="1"/>
</dbReference>
<dbReference type="PRINTS" id="PR00627">
    <property type="entry name" value="GTPRANTC4"/>
</dbReference>
<dbReference type="SMART" id="SM00175">
    <property type="entry name" value="RAB"/>
    <property type="match status" value="1"/>
</dbReference>
<dbReference type="SMART" id="SM00176">
    <property type="entry name" value="RAN"/>
    <property type="match status" value="1"/>
</dbReference>
<dbReference type="SMART" id="SM00173">
    <property type="entry name" value="RAS"/>
    <property type="match status" value="1"/>
</dbReference>
<dbReference type="SMART" id="SM00174">
    <property type="entry name" value="RHO"/>
    <property type="match status" value="1"/>
</dbReference>
<dbReference type="SUPFAM" id="SSF52540">
    <property type="entry name" value="P-loop containing nucleoside triphosphate hydrolases"/>
    <property type="match status" value="1"/>
</dbReference>
<dbReference type="PROSITE" id="PS51418">
    <property type="entry name" value="RAN"/>
    <property type="match status" value="1"/>
</dbReference>
<protein>
    <recommendedName>
        <fullName>GTP-binding nuclear protein Ran1B</fullName>
    </recommendedName>
</protein>
<sequence length="209" mass="23730">NFKLVIVGDGGTGKTTFVKRHLTGEFEKKYEPTIGVEVHPLDFFTNCGKIRFYCWDTAGQEKFGGLRDGYYIHGQCAIIMFDVTARLTYKNVPTWHRDLCRVCENIPIVLCGNKVDVKNRQVKAKQVTFHRKKNLQYYEISAKSNYNFEKPFLYLARKLAGDPNLHFVESPALAPPEVQIDLAAQQQHEAELAAAASQPLPDDDDDAFD</sequence>
<evidence type="ECO:0000250" key="1"/>
<evidence type="ECO:0000250" key="2">
    <source>
        <dbReference type="UniProtKB" id="P62825"/>
    </source>
</evidence>
<evidence type="ECO:0000255" key="3">
    <source>
        <dbReference type="PROSITE-ProRule" id="PRU00752"/>
    </source>
</evidence>
<evidence type="ECO:0000256" key="4">
    <source>
        <dbReference type="SAM" id="MobiDB-lite"/>
    </source>
</evidence>
<evidence type="ECO:0000305" key="5"/>
<proteinExistence type="evidence at transcript level"/>
<reference key="1">
    <citation type="journal article" date="1997" name="Plant J.">
        <title>Identification of new protein species among 33 different small GTP-binding proteins encoded by cDNAs from Lotus japonicus, and expression of corresponding mRNAs in developing root nodules.</title>
        <authorList>
            <person name="Borg S."/>
            <person name="Brandstrup B."/>
            <person name="Jensen T.J."/>
            <person name="Poulsen C."/>
        </authorList>
    </citation>
    <scope>NUCLEOTIDE SEQUENCE [MRNA]</scope>
    <source>
        <strain>cv. Gifu / B-129</strain>
        <tissue>Root nodule</tissue>
    </source>
</reference>